<keyword id="KW-1185">Reference proteome</keyword>
<keyword id="KW-0687">Ribonucleoprotein</keyword>
<keyword id="KW-0689">Ribosomal protein</keyword>
<keyword id="KW-0694">RNA-binding</keyword>
<keyword id="KW-0699">rRNA-binding</keyword>
<protein>
    <recommendedName>
        <fullName evidence="1">Small ribosomal subunit protein uS11</fullName>
    </recommendedName>
    <alternativeName>
        <fullName evidence="2">30S ribosomal protein S11</fullName>
    </alternativeName>
</protein>
<dbReference type="EMBL" id="CP001034">
    <property type="protein sequence ID" value="ACB83820.1"/>
    <property type="molecule type" value="Genomic_DNA"/>
</dbReference>
<dbReference type="RefSeq" id="WP_012446709.1">
    <property type="nucleotide sequence ID" value="NC_010718.1"/>
</dbReference>
<dbReference type="SMR" id="B2A4P8"/>
<dbReference type="FunCoup" id="B2A4P8">
    <property type="interactions" value="422"/>
</dbReference>
<dbReference type="STRING" id="457570.Nther_0221"/>
<dbReference type="KEGG" id="nth:Nther_0221"/>
<dbReference type="eggNOG" id="COG0100">
    <property type="taxonomic scope" value="Bacteria"/>
</dbReference>
<dbReference type="HOGENOM" id="CLU_072439_5_0_9"/>
<dbReference type="InParanoid" id="B2A4P8"/>
<dbReference type="OrthoDB" id="9806415at2"/>
<dbReference type="Proteomes" id="UP000001683">
    <property type="component" value="Chromosome"/>
</dbReference>
<dbReference type="GO" id="GO:1990904">
    <property type="term" value="C:ribonucleoprotein complex"/>
    <property type="evidence" value="ECO:0007669"/>
    <property type="project" value="UniProtKB-KW"/>
</dbReference>
<dbReference type="GO" id="GO:0005840">
    <property type="term" value="C:ribosome"/>
    <property type="evidence" value="ECO:0007669"/>
    <property type="project" value="UniProtKB-KW"/>
</dbReference>
<dbReference type="GO" id="GO:0019843">
    <property type="term" value="F:rRNA binding"/>
    <property type="evidence" value="ECO:0007669"/>
    <property type="project" value="UniProtKB-UniRule"/>
</dbReference>
<dbReference type="GO" id="GO:0003735">
    <property type="term" value="F:structural constituent of ribosome"/>
    <property type="evidence" value="ECO:0007669"/>
    <property type="project" value="InterPro"/>
</dbReference>
<dbReference type="GO" id="GO:0006412">
    <property type="term" value="P:translation"/>
    <property type="evidence" value="ECO:0007669"/>
    <property type="project" value="UniProtKB-UniRule"/>
</dbReference>
<dbReference type="FunFam" id="3.30.420.80:FF:000001">
    <property type="entry name" value="30S ribosomal protein S11"/>
    <property type="match status" value="1"/>
</dbReference>
<dbReference type="Gene3D" id="3.30.420.80">
    <property type="entry name" value="Ribosomal protein S11"/>
    <property type="match status" value="1"/>
</dbReference>
<dbReference type="HAMAP" id="MF_01310">
    <property type="entry name" value="Ribosomal_uS11"/>
    <property type="match status" value="1"/>
</dbReference>
<dbReference type="InterPro" id="IPR001971">
    <property type="entry name" value="Ribosomal_uS11"/>
</dbReference>
<dbReference type="InterPro" id="IPR019981">
    <property type="entry name" value="Ribosomal_uS11_bac-type"/>
</dbReference>
<dbReference type="InterPro" id="IPR018102">
    <property type="entry name" value="Ribosomal_uS11_CS"/>
</dbReference>
<dbReference type="InterPro" id="IPR036967">
    <property type="entry name" value="Ribosomal_uS11_sf"/>
</dbReference>
<dbReference type="NCBIfam" id="NF003698">
    <property type="entry name" value="PRK05309.1"/>
    <property type="match status" value="1"/>
</dbReference>
<dbReference type="NCBIfam" id="TIGR03632">
    <property type="entry name" value="uS11_bact"/>
    <property type="match status" value="1"/>
</dbReference>
<dbReference type="PANTHER" id="PTHR11759">
    <property type="entry name" value="40S RIBOSOMAL PROTEIN S14/30S RIBOSOMAL PROTEIN S11"/>
    <property type="match status" value="1"/>
</dbReference>
<dbReference type="Pfam" id="PF00411">
    <property type="entry name" value="Ribosomal_S11"/>
    <property type="match status" value="1"/>
</dbReference>
<dbReference type="PIRSF" id="PIRSF002131">
    <property type="entry name" value="Ribosomal_S11"/>
    <property type="match status" value="1"/>
</dbReference>
<dbReference type="SUPFAM" id="SSF53137">
    <property type="entry name" value="Translational machinery components"/>
    <property type="match status" value="1"/>
</dbReference>
<dbReference type="PROSITE" id="PS00054">
    <property type="entry name" value="RIBOSOMAL_S11"/>
    <property type="match status" value="1"/>
</dbReference>
<evidence type="ECO:0000255" key="1">
    <source>
        <dbReference type="HAMAP-Rule" id="MF_01310"/>
    </source>
</evidence>
<evidence type="ECO:0000305" key="2"/>
<name>RS11_NATTJ</name>
<reference key="1">
    <citation type="submission" date="2008-04" db="EMBL/GenBank/DDBJ databases">
        <title>Complete sequence of chromosome of Natranaerobius thermophilus JW/NM-WN-LF.</title>
        <authorList>
            <consortium name="US DOE Joint Genome Institute"/>
            <person name="Copeland A."/>
            <person name="Lucas S."/>
            <person name="Lapidus A."/>
            <person name="Glavina del Rio T."/>
            <person name="Dalin E."/>
            <person name="Tice H."/>
            <person name="Bruce D."/>
            <person name="Goodwin L."/>
            <person name="Pitluck S."/>
            <person name="Chertkov O."/>
            <person name="Brettin T."/>
            <person name="Detter J.C."/>
            <person name="Han C."/>
            <person name="Kuske C.R."/>
            <person name="Schmutz J."/>
            <person name="Larimer F."/>
            <person name="Land M."/>
            <person name="Hauser L."/>
            <person name="Kyrpides N."/>
            <person name="Lykidis A."/>
            <person name="Mesbah N.M."/>
            <person name="Wiegel J."/>
        </authorList>
    </citation>
    <scope>NUCLEOTIDE SEQUENCE [LARGE SCALE GENOMIC DNA]</scope>
    <source>
        <strain>ATCC BAA-1301 / DSM 18059 / JW/NM-WN-LF</strain>
    </source>
</reference>
<proteinExistence type="inferred from homology"/>
<sequence length="131" mass="13891">MARRKRAAARKKKVKKNIESGIATINSTFNNTLVNITDSDGNTMAWSSSGACGFKGSRKGTPYAAQIAAETAAKTAMEDGLKGVEVRVKGPGSGREAAIRSLQAAGLEINAIKDITPIPHNGCRPPKRRRV</sequence>
<organism>
    <name type="scientific">Natranaerobius thermophilus (strain ATCC BAA-1301 / DSM 18059 / JW/NM-WN-LF)</name>
    <dbReference type="NCBI Taxonomy" id="457570"/>
    <lineage>
        <taxon>Bacteria</taxon>
        <taxon>Bacillati</taxon>
        <taxon>Bacillota</taxon>
        <taxon>Clostridia</taxon>
        <taxon>Natranaerobiales</taxon>
        <taxon>Natranaerobiaceae</taxon>
        <taxon>Natranaerobius</taxon>
    </lineage>
</organism>
<accession>B2A4P8</accession>
<comment type="function">
    <text evidence="1">Located on the platform of the 30S subunit, it bridges several disparate RNA helices of the 16S rRNA. Forms part of the Shine-Dalgarno cleft in the 70S ribosome.</text>
</comment>
<comment type="subunit">
    <text evidence="1">Part of the 30S ribosomal subunit. Interacts with proteins S7 and S18. Binds to IF-3.</text>
</comment>
<comment type="similarity">
    <text evidence="1">Belongs to the universal ribosomal protein uS11 family.</text>
</comment>
<feature type="chain" id="PRO_1000141115" description="Small ribosomal subunit protein uS11">
    <location>
        <begin position="1"/>
        <end position="131"/>
    </location>
</feature>
<gene>
    <name evidence="1" type="primary">rpsK</name>
    <name type="ordered locus">Nther_0221</name>
</gene>